<keyword id="KW-0687">Ribonucleoprotein</keyword>
<keyword id="KW-0689">Ribosomal protein</keyword>
<keyword id="KW-0694">RNA-binding</keyword>
<keyword id="KW-0699">rRNA-binding</keyword>
<keyword id="KW-0820">tRNA-binding</keyword>
<gene>
    <name evidence="1" type="primary">rplE</name>
    <name type="ordered locus">SMGWSS_232</name>
</gene>
<reference key="1">
    <citation type="journal article" date="2007" name="Proc. Natl. Acad. Sci. U.S.A.">
        <title>Parallel genomic evolution and metabolic interdependence in an ancient symbiosis.</title>
        <authorList>
            <person name="McCutcheon J.P."/>
            <person name="Moran N.A."/>
        </authorList>
    </citation>
    <scope>NUCLEOTIDE SEQUENCE [LARGE SCALE GENOMIC DNA]</scope>
    <source>
        <strain>GWSS</strain>
    </source>
</reference>
<proteinExistence type="inferred from homology"/>
<sequence length="186" mass="21515">MNYCPRPKYLYKKKIINKLIEKFNYKSVMQVPKLKKIVINQGINVLIYDNKTINNAINNITAITGQKAIYCLSKRDESGFKLRKGTPISIKVTLRRDIMYEFLDRLINIALPRVRDFVGVNKNSFDGEGNYNLGISEQIIFPEINTDSLKNNFGMNITFVTSSKKNKEAKYLLYLFGLPFKTKKNV</sequence>
<evidence type="ECO:0000255" key="1">
    <source>
        <dbReference type="HAMAP-Rule" id="MF_01333"/>
    </source>
</evidence>
<evidence type="ECO:0000305" key="2"/>
<organism>
    <name type="scientific">Karelsulcia muelleri (strain GWSS)</name>
    <name type="common">Sulcia muelleri</name>
    <dbReference type="NCBI Taxonomy" id="444179"/>
    <lineage>
        <taxon>Bacteria</taxon>
        <taxon>Pseudomonadati</taxon>
        <taxon>Bacteroidota</taxon>
        <taxon>Flavobacteriia</taxon>
        <taxon>Flavobacteriales</taxon>
        <taxon>Candidatus Karelsulcia</taxon>
    </lineage>
</organism>
<protein>
    <recommendedName>
        <fullName evidence="1">Large ribosomal subunit protein uL5</fullName>
    </recommendedName>
    <alternativeName>
        <fullName evidence="2">50S ribosomal protein L5</fullName>
    </alternativeName>
</protein>
<comment type="function">
    <text evidence="1">This is one of the proteins that bind and probably mediate the attachment of the 5S RNA into the large ribosomal subunit, where it forms part of the central protuberance. In the 70S ribosome it contacts protein S13 of the 30S subunit (bridge B1b), connecting the 2 subunits; this bridge is implicated in subunit movement. Contacts the P site tRNA; the 5S rRNA and some of its associated proteins might help stabilize positioning of ribosome-bound tRNAs.</text>
</comment>
<comment type="subunit">
    <text evidence="1">Part of the 50S ribosomal subunit; part of the 5S rRNA/L5/L18/L25 subcomplex. Contacts the 5S rRNA and the P site tRNA. Forms a bridge to the 30S subunit in the 70S ribosome.</text>
</comment>
<comment type="similarity">
    <text evidence="1">Belongs to the universal ribosomal protein uL5 family.</text>
</comment>
<accession>A8Z678</accession>
<dbReference type="EMBL" id="CP000770">
    <property type="protein sequence ID" value="ABS30629.1"/>
    <property type="molecule type" value="Genomic_DNA"/>
</dbReference>
<dbReference type="SMR" id="A8Z678"/>
<dbReference type="STRING" id="444179.SMGWSS_232"/>
<dbReference type="KEGG" id="smg:SMGWSS_232"/>
<dbReference type="HOGENOM" id="CLU_061015_2_1_10"/>
<dbReference type="Proteomes" id="UP000000781">
    <property type="component" value="Chromosome"/>
</dbReference>
<dbReference type="GO" id="GO:1990904">
    <property type="term" value="C:ribonucleoprotein complex"/>
    <property type="evidence" value="ECO:0007669"/>
    <property type="project" value="UniProtKB-KW"/>
</dbReference>
<dbReference type="GO" id="GO:0005840">
    <property type="term" value="C:ribosome"/>
    <property type="evidence" value="ECO:0007669"/>
    <property type="project" value="UniProtKB-KW"/>
</dbReference>
<dbReference type="GO" id="GO:0019843">
    <property type="term" value="F:rRNA binding"/>
    <property type="evidence" value="ECO:0007669"/>
    <property type="project" value="UniProtKB-UniRule"/>
</dbReference>
<dbReference type="GO" id="GO:0003735">
    <property type="term" value="F:structural constituent of ribosome"/>
    <property type="evidence" value="ECO:0007669"/>
    <property type="project" value="InterPro"/>
</dbReference>
<dbReference type="GO" id="GO:0000049">
    <property type="term" value="F:tRNA binding"/>
    <property type="evidence" value="ECO:0007669"/>
    <property type="project" value="UniProtKB-UniRule"/>
</dbReference>
<dbReference type="GO" id="GO:0006412">
    <property type="term" value="P:translation"/>
    <property type="evidence" value="ECO:0007669"/>
    <property type="project" value="UniProtKB-UniRule"/>
</dbReference>
<dbReference type="FunFam" id="3.30.1440.10:FF:000001">
    <property type="entry name" value="50S ribosomal protein L5"/>
    <property type="match status" value="1"/>
</dbReference>
<dbReference type="Gene3D" id="3.30.1440.10">
    <property type="match status" value="1"/>
</dbReference>
<dbReference type="HAMAP" id="MF_01333_B">
    <property type="entry name" value="Ribosomal_uL5_B"/>
    <property type="match status" value="1"/>
</dbReference>
<dbReference type="InterPro" id="IPR002132">
    <property type="entry name" value="Ribosomal_uL5"/>
</dbReference>
<dbReference type="InterPro" id="IPR020930">
    <property type="entry name" value="Ribosomal_uL5_bac-type"/>
</dbReference>
<dbReference type="InterPro" id="IPR031309">
    <property type="entry name" value="Ribosomal_uL5_C"/>
</dbReference>
<dbReference type="InterPro" id="IPR022803">
    <property type="entry name" value="Ribosomal_uL5_dom_sf"/>
</dbReference>
<dbReference type="InterPro" id="IPR031310">
    <property type="entry name" value="Ribosomal_uL5_N"/>
</dbReference>
<dbReference type="NCBIfam" id="NF000585">
    <property type="entry name" value="PRK00010.1"/>
    <property type="match status" value="1"/>
</dbReference>
<dbReference type="PANTHER" id="PTHR11994">
    <property type="entry name" value="60S RIBOSOMAL PROTEIN L11-RELATED"/>
    <property type="match status" value="1"/>
</dbReference>
<dbReference type="Pfam" id="PF00281">
    <property type="entry name" value="Ribosomal_L5"/>
    <property type="match status" value="1"/>
</dbReference>
<dbReference type="Pfam" id="PF00673">
    <property type="entry name" value="Ribosomal_L5_C"/>
    <property type="match status" value="1"/>
</dbReference>
<dbReference type="PIRSF" id="PIRSF002161">
    <property type="entry name" value="Ribosomal_L5"/>
    <property type="match status" value="1"/>
</dbReference>
<dbReference type="SUPFAM" id="SSF55282">
    <property type="entry name" value="RL5-like"/>
    <property type="match status" value="1"/>
</dbReference>
<feature type="chain" id="PRO_1000142461" description="Large ribosomal subunit protein uL5">
    <location>
        <begin position="1"/>
        <end position="186"/>
    </location>
</feature>
<name>RL5_KARMG</name>